<dbReference type="EC" id="7.1.1.-" evidence="1"/>
<dbReference type="EMBL" id="CP000927">
    <property type="protein sequence ID" value="ABZ71960.1"/>
    <property type="molecule type" value="Genomic_DNA"/>
</dbReference>
<dbReference type="SMR" id="B0SZ49"/>
<dbReference type="STRING" id="366602.Caul_2833"/>
<dbReference type="KEGG" id="cak:Caul_2833"/>
<dbReference type="eggNOG" id="COG0649">
    <property type="taxonomic scope" value="Bacteria"/>
</dbReference>
<dbReference type="HOGENOM" id="CLU_015134_1_1_5"/>
<dbReference type="OrthoDB" id="9801496at2"/>
<dbReference type="GO" id="GO:0005886">
    <property type="term" value="C:plasma membrane"/>
    <property type="evidence" value="ECO:0007669"/>
    <property type="project" value="UniProtKB-SubCell"/>
</dbReference>
<dbReference type="GO" id="GO:0051287">
    <property type="term" value="F:NAD binding"/>
    <property type="evidence" value="ECO:0007669"/>
    <property type="project" value="InterPro"/>
</dbReference>
<dbReference type="GO" id="GO:0050136">
    <property type="term" value="F:NADH:ubiquinone reductase (non-electrogenic) activity"/>
    <property type="evidence" value="ECO:0007669"/>
    <property type="project" value="UniProtKB-UniRule"/>
</dbReference>
<dbReference type="GO" id="GO:0048038">
    <property type="term" value="F:quinone binding"/>
    <property type="evidence" value="ECO:0007669"/>
    <property type="project" value="UniProtKB-KW"/>
</dbReference>
<dbReference type="FunFam" id="1.10.645.10:FF:000005">
    <property type="entry name" value="NADH-quinone oxidoreductase subunit D"/>
    <property type="match status" value="1"/>
</dbReference>
<dbReference type="Gene3D" id="1.10.645.10">
    <property type="entry name" value="Cytochrome-c3 Hydrogenase, chain B"/>
    <property type="match status" value="1"/>
</dbReference>
<dbReference type="HAMAP" id="MF_01358">
    <property type="entry name" value="NDH1_NuoD"/>
    <property type="match status" value="1"/>
</dbReference>
<dbReference type="InterPro" id="IPR001135">
    <property type="entry name" value="NADH_Q_OxRdtase_suD"/>
</dbReference>
<dbReference type="InterPro" id="IPR014029">
    <property type="entry name" value="NADH_UbQ_OxRdtase_49kDa_CS"/>
</dbReference>
<dbReference type="InterPro" id="IPR022885">
    <property type="entry name" value="NDH1_su_D/H"/>
</dbReference>
<dbReference type="InterPro" id="IPR029014">
    <property type="entry name" value="NiFe-Hase_large"/>
</dbReference>
<dbReference type="NCBIfam" id="TIGR01962">
    <property type="entry name" value="NuoD"/>
    <property type="match status" value="1"/>
</dbReference>
<dbReference type="NCBIfam" id="NF004739">
    <property type="entry name" value="PRK06075.1"/>
    <property type="match status" value="1"/>
</dbReference>
<dbReference type="PANTHER" id="PTHR11993:SF10">
    <property type="entry name" value="NADH DEHYDROGENASE [UBIQUINONE] IRON-SULFUR PROTEIN 2, MITOCHONDRIAL"/>
    <property type="match status" value="1"/>
</dbReference>
<dbReference type="PANTHER" id="PTHR11993">
    <property type="entry name" value="NADH-UBIQUINONE OXIDOREDUCTASE 49 KDA SUBUNIT"/>
    <property type="match status" value="1"/>
</dbReference>
<dbReference type="Pfam" id="PF00346">
    <property type="entry name" value="Complex1_49kDa"/>
    <property type="match status" value="1"/>
</dbReference>
<dbReference type="SUPFAM" id="SSF56762">
    <property type="entry name" value="HydB/Nqo4-like"/>
    <property type="match status" value="1"/>
</dbReference>
<dbReference type="PROSITE" id="PS00535">
    <property type="entry name" value="COMPLEX1_49K"/>
    <property type="match status" value="1"/>
</dbReference>
<feature type="chain" id="PRO_0000357792" description="NADH-quinone oxidoreductase subunit D">
    <location>
        <begin position="1"/>
        <end position="416"/>
    </location>
</feature>
<accession>B0SZ49</accession>
<organism>
    <name type="scientific">Caulobacter sp. (strain K31)</name>
    <dbReference type="NCBI Taxonomy" id="366602"/>
    <lineage>
        <taxon>Bacteria</taxon>
        <taxon>Pseudomonadati</taxon>
        <taxon>Pseudomonadota</taxon>
        <taxon>Alphaproteobacteria</taxon>
        <taxon>Caulobacterales</taxon>
        <taxon>Caulobacteraceae</taxon>
        <taxon>Caulobacter</taxon>
    </lineage>
</organism>
<name>NUOD_CAUSK</name>
<comment type="function">
    <text evidence="1">NDH-1 shuttles electrons from NADH, via FMN and iron-sulfur (Fe-S) centers, to quinones in the respiratory chain. The immediate electron acceptor for the enzyme in this species is believed to be ubiquinone. Couples the redox reaction to proton translocation (for every two electrons transferred, four hydrogen ions are translocated across the cytoplasmic membrane), and thus conserves the redox energy in a proton gradient.</text>
</comment>
<comment type="catalytic activity">
    <reaction evidence="1">
        <text>a quinone + NADH + 5 H(+)(in) = a quinol + NAD(+) + 4 H(+)(out)</text>
        <dbReference type="Rhea" id="RHEA:57888"/>
        <dbReference type="ChEBI" id="CHEBI:15378"/>
        <dbReference type="ChEBI" id="CHEBI:24646"/>
        <dbReference type="ChEBI" id="CHEBI:57540"/>
        <dbReference type="ChEBI" id="CHEBI:57945"/>
        <dbReference type="ChEBI" id="CHEBI:132124"/>
    </reaction>
</comment>
<comment type="subunit">
    <text evidence="1">NDH-1 is composed of 14 different subunits. Subunits NuoB, C, D, E, F, and G constitute the peripheral sector of the complex.</text>
</comment>
<comment type="subcellular location">
    <subcellularLocation>
        <location evidence="1">Cell inner membrane</location>
        <topology evidence="1">Peripheral membrane protein</topology>
        <orientation evidence="1">Cytoplasmic side</orientation>
    </subcellularLocation>
</comment>
<comment type="similarity">
    <text evidence="1">Belongs to the complex I 49 kDa subunit family.</text>
</comment>
<gene>
    <name evidence="1" type="primary">nuoD</name>
    <name type="ordered locus">Caul_2833</name>
</gene>
<protein>
    <recommendedName>
        <fullName evidence="1">NADH-quinone oxidoreductase subunit D</fullName>
        <ecNumber evidence="1">7.1.1.-</ecNumber>
    </recommendedName>
    <alternativeName>
        <fullName evidence="1">NADH dehydrogenase I subunit D</fullName>
    </alternativeName>
    <alternativeName>
        <fullName evidence="1">NDH-1 subunit D</fullName>
    </alternativeName>
</protein>
<keyword id="KW-0997">Cell inner membrane</keyword>
<keyword id="KW-1003">Cell membrane</keyword>
<keyword id="KW-0472">Membrane</keyword>
<keyword id="KW-0520">NAD</keyword>
<keyword id="KW-0874">Quinone</keyword>
<keyword id="KW-1278">Translocase</keyword>
<keyword id="KW-0813">Transport</keyword>
<keyword id="KW-0830">Ubiquinone</keyword>
<evidence type="ECO:0000255" key="1">
    <source>
        <dbReference type="HAMAP-Rule" id="MF_01358"/>
    </source>
</evidence>
<proteinExistence type="inferred from homology"/>
<reference key="1">
    <citation type="submission" date="2008-01" db="EMBL/GenBank/DDBJ databases">
        <title>Complete sequence of chromosome of Caulobacter sp. K31.</title>
        <authorList>
            <consortium name="US DOE Joint Genome Institute"/>
            <person name="Copeland A."/>
            <person name="Lucas S."/>
            <person name="Lapidus A."/>
            <person name="Barry K."/>
            <person name="Glavina del Rio T."/>
            <person name="Dalin E."/>
            <person name="Tice H."/>
            <person name="Pitluck S."/>
            <person name="Bruce D."/>
            <person name="Goodwin L."/>
            <person name="Thompson L.S."/>
            <person name="Brettin T."/>
            <person name="Detter J.C."/>
            <person name="Han C."/>
            <person name="Schmutz J."/>
            <person name="Larimer F."/>
            <person name="Land M."/>
            <person name="Hauser L."/>
            <person name="Kyrpides N."/>
            <person name="Kim E."/>
            <person name="Stephens C."/>
            <person name="Richardson P."/>
        </authorList>
    </citation>
    <scope>NUCLEOTIDE SEQUENCE [LARGE SCALE GENOMIC DNA]</scope>
    <source>
        <strain>K31</strain>
    </source>
</reference>
<sequence>MTGSNSPAAATDFFHDAPSLPAVPETPVRKFNINFGPQHPAAHGVLRLVLELDGEIVERVDPHIGLLHRGTEKLMEARTYLQNIPYFDRLDYVAPMNQEHAFCLAIEKLLGVDVPLRGSLIRVLFCEIGRVLNHLLNVTTQAMDVGALTPPLWGFEEREKLMVFYERACGARLHANYFRPGGVHQDLTPSLIDDIEKWAKAFPKICDDIEGLITDNRIFKQRNVDIGVVTKEDALAWGFSGVMVRGSGIAWDLRRNQPYECYNDFEFDIPLGKNGDCYDRYLCRMQEMRESTKIILQAIEKLRATPGPVMTQDNKVAPPRRAEMKRSMEALIHHFKLYTEGFRTPEGEVYACVEAPKGEFGVFLVSNGTNKPYRCKIKAPGFSHLAAMDWMNRGHQLADVSAILGSLDIVFGEVDR</sequence>